<accession>P18766</accession>
<comment type="function">
    <text>Part of the binding-protein-dependent transport system for oligopeptides. Probably responsible for energy coupling to the transport system.</text>
</comment>
<comment type="subcellular location">
    <subcellularLocation>
        <location>Cell membrane</location>
        <topology>Peripheral membrane protein</topology>
    </subcellularLocation>
</comment>
<comment type="similarity">
    <text evidence="2">Belongs to the ABC transporter superfamily.</text>
</comment>
<sequence length="308" mass="34797">MSEKLVEIKDLEISFGEGSKKFVAVKNANFFINKGETFSLVGESGSGKTTIGRAIIGLNDTSNGDIIFDGQKINGKKSREQAAELIRRIQMIFQDPAASLNERATVDYIISEGLYNHRLFKDEEERKEKVQNIIREVGLLAEHLTRYPHEFSGGQRQRIGIARALVMQPDFVIADEPISALDVSVRAQVLNLLKKFQKELGLTYLFIAHDLSVVRFISDRIAVIYKGVIVEVAETEELFNNPIHPYTQALLSAVPIPDPILERKKVLKVYDPSQHDYETDKPSMVEIRPGHYVWANQAELARYQKGLN</sequence>
<name>AMIF_STRPN</name>
<protein>
    <recommendedName>
        <fullName>Oligopeptide transport ATP-binding protein AmiF</fullName>
    </recommendedName>
</protein>
<keyword id="KW-0067">ATP-binding</keyword>
<keyword id="KW-1003">Cell membrane</keyword>
<keyword id="KW-0472">Membrane</keyword>
<keyword id="KW-0547">Nucleotide-binding</keyword>
<keyword id="KW-0571">Peptide transport</keyword>
<keyword id="KW-0653">Protein transport</keyword>
<keyword id="KW-1185">Reference proteome</keyword>
<keyword id="KW-0813">Transport</keyword>
<proteinExistence type="inferred from homology"/>
<reference key="1">
    <citation type="journal article" date="1990" name="Mol. Microbiol.">
        <title>The ami locus of the Gram-positive bacterium Streptococcus pneumoniae is similar to binding protein-dependent transport operons of Gram-negative bacteria.</title>
        <authorList>
            <person name="Alloing G."/>
            <person name="Trombe M.C."/>
            <person name="Claverys J.-P."/>
        </authorList>
    </citation>
    <scope>NUCLEOTIDE SEQUENCE [GENOMIC DNA]</scope>
    <source>
        <strain>R6 / R800</strain>
    </source>
</reference>
<reference key="2">
    <citation type="journal article" date="2001" name="Science">
        <title>Complete genome sequence of a virulent isolate of Streptococcus pneumoniae.</title>
        <authorList>
            <person name="Tettelin H."/>
            <person name="Nelson K.E."/>
            <person name="Paulsen I.T."/>
            <person name="Eisen J.A."/>
            <person name="Read T.D."/>
            <person name="Peterson S.N."/>
            <person name="Heidelberg J.F."/>
            <person name="DeBoy R.T."/>
            <person name="Haft D.H."/>
            <person name="Dodson R.J."/>
            <person name="Durkin A.S."/>
            <person name="Gwinn M.L."/>
            <person name="Kolonay J.F."/>
            <person name="Nelson W.C."/>
            <person name="Peterson J.D."/>
            <person name="Umayam L.A."/>
            <person name="White O."/>
            <person name="Salzberg S.L."/>
            <person name="Lewis M.R."/>
            <person name="Radune D."/>
            <person name="Holtzapple E.K."/>
            <person name="Khouri H.M."/>
            <person name="Wolf A.M."/>
            <person name="Utterback T.R."/>
            <person name="Hansen C.L."/>
            <person name="McDonald L.A."/>
            <person name="Feldblyum T.V."/>
            <person name="Angiuoli S.V."/>
            <person name="Dickinson T."/>
            <person name="Hickey E.K."/>
            <person name="Holt I.E."/>
            <person name="Loftus B.J."/>
            <person name="Yang F."/>
            <person name="Smith H.O."/>
            <person name="Venter J.C."/>
            <person name="Dougherty B.A."/>
            <person name="Morrison D.A."/>
            <person name="Hollingshead S.K."/>
            <person name="Fraser C.M."/>
        </authorList>
    </citation>
    <scope>NUCLEOTIDE SEQUENCE [LARGE SCALE GENOMIC DNA]</scope>
    <source>
        <strain>ATCC BAA-334 / TIGR4</strain>
    </source>
</reference>
<evidence type="ECO:0000255" key="1">
    <source>
        <dbReference type="PROSITE-ProRule" id="PRU00434"/>
    </source>
</evidence>
<evidence type="ECO:0000305" key="2"/>
<gene>
    <name type="primary">amiF</name>
    <name type="ordered locus">SP_1887</name>
</gene>
<feature type="chain" id="PRO_0000091929" description="Oligopeptide transport ATP-binding protein AmiF">
    <location>
        <begin position="1"/>
        <end position="308"/>
    </location>
</feature>
<feature type="domain" description="ABC transporter" evidence="1">
    <location>
        <begin position="6"/>
        <end position="251"/>
    </location>
</feature>
<feature type="binding site" evidence="1">
    <location>
        <begin position="42"/>
        <end position="49"/>
    </location>
    <ligand>
        <name>ATP</name>
        <dbReference type="ChEBI" id="CHEBI:30616"/>
    </ligand>
</feature>
<feature type="sequence conflict" description="In Ref. 1; CAA35217." evidence="2" ref="1">
    <original>N</original>
    <variation>S</variation>
    <location>
        <position position="132"/>
    </location>
</feature>
<feature type="sequence conflict" description="In Ref. 1; CAA35217." evidence="2" ref="1">
    <original>DP</original>
    <variation>EG</variation>
    <location>
        <begin position="271"/>
        <end position="272"/>
    </location>
</feature>
<organism>
    <name type="scientific">Streptococcus pneumoniae serotype 4 (strain ATCC BAA-334 / TIGR4)</name>
    <dbReference type="NCBI Taxonomy" id="170187"/>
    <lineage>
        <taxon>Bacteria</taxon>
        <taxon>Bacillati</taxon>
        <taxon>Bacillota</taxon>
        <taxon>Bacilli</taxon>
        <taxon>Lactobacillales</taxon>
        <taxon>Streptococcaceae</taxon>
        <taxon>Streptococcus</taxon>
    </lineage>
</organism>
<dbReference type="EMBL" id="X17337">
    <property type="protein sequence ID" value="CAA35217.1"/>
    <property type="molecule type" value="Genomic_DNA"/>
</dbReference>
<dbReference type="EMBL" id="AE005672">
    <property type="protein sequence ID" value="AAK75958.1"/>
    <property type="molecule type" value="Genomic_DNA"/>
</dbReference>
<dbReference type="PIR" id="E95220">
    <property type="entry name" value="E95220"/>
</dbReference>
<dbReference type="PIR" id="S11153">
    <property type="entry name" value="S11153"/>
</dbReference>
<dbReference type="RefSeq" id="WP_001291293.1">
    <property type="nucleotide sequence ID" value="NZ_CP155539.1"/>
</dbReference>
<dbReference type="SMR" id="P18766"/>
<dbReference type="PaxDb" id="170187-SP_1887"/>
<dbReference type="EnsemblBacteria" id="AAK75958">
    <property type="protein sequence ID" value="AAK75958"/>
    <property type="gene ID" value="SP_1887"/>
</dbReference>
<dbReference type="KEGG" id="spn:SP_1887"/>
<dbReference type="eggNOG" id="COG4608">
    <property type="taxonomic scope" value="Bacteria"/>
</dbReference>
<dbReference type="PhylomeDB" id="P18766"/>
<dbReference type="BioCyc" id="SPNE170187:G1FZB-1917-MONOMER"/>
<dbReference type="Proteomes" id="UP000000585">
    <property type="component" value="Chromosome"/>
</dbReference>
<dbReference type="GO" id="GO:0005886">
    <property type="term" value="C:plasma membrane"/>
    <property type="evidence" value="ECO:0007669"/>
    <property type="project" value="UniProtKB-SubCell"/>
</dbReference>
<dbReference type="GO" id="GO:0005524">
    <property type="term" value="F:ATP binding"/>
    <property type="evidence" value="ECO:0007669"/>
    <property type="project" value="UniProtKB-KW"/>
</dbReference>
<dbReference type="GO" id="GO:0016887">
    <property type="term" value="F:ATP hydrolysis activity"/>
    <property type="evidence" value="ECO:0007669"/>
    <property type="project" value="InterPro"/>
</dbReference>
<dbReference type="GO" id="GO:0015833">
    <property type="term" value="P:peptide transport"/>
    <property type="evidence" value="ECO:0007669"/>
    <property type="project" value="UniProtKB-KW"/>
</dbReference>
<dbReference type="GO" id="GO:0015031">
    <property type="term" value="P:protein transport"/>
    <property type="evidence" value="ECO:0007669"/>
    <property type="project" value="UniProtKB-KW"/>
</dbReference>
<dbReference type="GO" id="GO:0055085">
    <property type="term" value="P:transmembrane transport"/>
    <property type="evidence" value="ECO:0007669"/>
    <property type="project" value="UniProtKB-ARBA"/>
</dbReference>
<dbReference type="CDD" id="cd03257">
    <property type="entry name" value="ABC_NikE_OppD_transporters"/>
    <property type="match status" value="1"/>
</dbReference>
<dbReference type="FunFam" id="3.40.50.300:FF:000016">
    <property type="entry name" value="Oligopeptide ABC transporter ATP-binding component"/>
    <property type="match status" value="1"/>
</dbReference>
<dbReference type="Gene3D" id="3.40.50.300">
    <property type="entry name" value="P-loop containing nucleotide triphosphate hydrolases"/>
    <property type="match status" value="1"/>
</dbReference>
<dbReference type="InterPro" id="IPR003593">
    <property type="entry name" value="AAA+_ATPase"/>
</dbReference>
<dbReference type="InterPro" id="IPR050319">
    <property type="entry name" value="ABC_transp_ATP-bind"/>
</dbReference>
<dbReference type="InterPro" id="IPR003439">
    <property type="entry name" value="ABC_transporter-like_ATP-bd"/>
</dbReference>
<dbReference type="InterPro" id="IPR017871">
    <property type="entry name" value="ABC_transporter-like_CS"/>
</dbReference>
<dbReference type="InterPro" id="IPR013563">
    <property type="entry name" value="Oligopep_ABC_C"/>
</dbReference>
<dbReference type="InterPro" id="IPR027417">
    <property type="entry name" value="P-loop_NTPase"/>
</dbReference>
<dbReference type="PANTHER" id="PTHR43776:SF7">
    <property type="entry name" value="D,D-DIPEPTIDE TRANSPORT ATP-BINDING PROTEIN DDPF-RELATED"/>
    <property type="match status" value="1"/>
</dbReference>
<dbReference type="PANTHER" id="PTHR43776">
    <property type="entry name" value="TRANSPORT ATP-BINDING PROTEIN"/>
    <property type="match status" value="1"/>
</dbReference>
<dbReference type="Pfam" id="PF00005">
    <property type="entry name" value="ABC_tran"/>
    <property type="match status" value="1"/>
</dbReference>
<dbReference type="Pfam" id="PF08352">
    <property type="entry name" value="oligo_HPY"/>
    <property type="match status" value="1"/>
</dbReference>
<dbReference type="SMART" id="SM00382">
    <property type="entry name" value="AAA"/>
    <property type="match status" value="1"/>
</dbReference>
<dbReference type="SUPFAM" id="SSF52540">
    <property type="entry name" value="P-loop containing nucleoside triphosphate hydrolases"/>
    <property type="match status" value="1"/>
</dbReference>
<dbReference type="PROSITE" id="PS00211">
    <property type="entry name" value="ABC_TRANSPORTER_1"/>
    <property type="match status" value="1"/>
</dbReference>
<dbReference type="PROSITE" id="PS50893">
    <property type="entry name" value="ABC_TRANSPORTER_2"/>
    <property type="match status" value="1"/>
</dbReference>